<name>PYRG_STRM5</name>
<feature type="chain" id="PRO_1000139590" description="CTP synthase">
    <location>
        <begin position="1"/>
        <end position="554"/>
    </location>
</feature>
<feature type="domain" description="Glutamine amidotransferase type-1" evidence="1">
    <location>
        <begin position="292"/>
        <end position="545"/>
    </location>
</feature>
<feature type="region of interest" description="Amidoligase domain" evidence="1">
    <location>
        <begin position="1"/>
        <end position="265"/>
    </location>
</feature>
<feature type="active site" description="Nucleophile; for glutamine hydrolysis" evidence="1">
    <location>
        <position position="380"/>
    </location>
</feature>
<feature type="active site" evidence="1">
    <location>
        <position position="518"/>
    </location>
</feature>
<feature type="active site" evidence="1">
    <location>
        <position position="520"/>
    </location>
</feature>
<feature type="binding site" evidence="1">
    <location>
        <position position="13"/>
    </location>
    <ligand>
        <name>CTP</name>
        <dbReference type="ChEBI" id="CHEBI:37563"/>
        <note>allosteric inhibitor</note>
    </ligand>
</feature>
<feature type="binding site" evidence="1">
    <location>
        <position position="13"/>
    </location>
    <ligand>
        <name>UTP</name>
        <dbReference type="ChEBI" id="CHEBI:46398"/>
    </ligand>
</feature>
<feature type="binding site" evidence="1">
    <location>
        <begin position="14"/>
        <end position="19"/>
    </location>
    <ligand>
        <name>ATP</name>
        <dbReference type="ChEBI" id="CHEBI:30616"/>
    </ligand>
</feature>
<feature type="binding site" evidence="1">
    <location>
        <position position="71"/>
    </location>
    <ligand>
        <name>ATP</name>
        <dbReference type="ChEBI" id="CHEBI:30616"/>
    </ligand>
</feature>
<feature type="binding site" evidence="1">
    <location>
        <position position="71"/>
    </location>
    <ligand>
        <name>Mg(2+)</name>
        <dbReference type="ChEBI" id="CHEBI:18420"/>
    </ligand>
</feature>
<feature type="binding site" evidence="1">
    <location>
        <position position="139"/>
    </location>
    <ligand>
        <name>Mg(2+)</name>
        <dbReference type="ChEBI" id="CHEBI:18420"/>
    </ligand>
</feature>
<feature type="binding site" evidence="1">
    <location>
        <begin position="146"/>
        <end position="148"/>
    </location>
    <ligand>
        <name>CTP</name>
        <dbReference type="ChEBI" id="CHEBI:37563"/>
        <note>allosteric inhibitor</note>
    </ligand>
</feature>
<feature type="binding site" evidence="1">
    <location>
        <begin position="186"/>
        <end position="191"/>
    </location>
    <ligand>
        <name>CTP</name>
        <dbReference type="ChEBI" id="CHEBI:37563"/>
        <note>allosteric inhibitor</note>
    </ligand>
</feature>
<feature type="binding site" evidence="1">
    <location>
        <begin position="186"/>
        <end position="191"/>
    </location>
    <ligand>
        <name>UTP</name>
        <dbReference type="ChEBI" id="CHEBI:46398"/>
    </ligand>
</feature>
<feature type="binding site" evidence="1">
    <location>
        <position position="222"/>
    </location>
    <ligand>
        <name>CTP</name>
        <dbReference type="ChEBI" id="CHEBI:37563"/>
        <note>allosteric inhibitor</note>
    </ligand>
</feature>
<feature type="binding site" evidence="1">
    <location>
        <position position="222"/>
    </location>
    <ligand>
        <name>UTP</name>
        <dbReference type="ChEBI" id="CHEBI:46398"/>
    </ligand>
</feature>
<feature type="binding site" evidence="1">
    <location>
        <position position="353"/>
    </location>
    <ligand>
        <name>L-glutamine</name>
        <dbReference type="ChEBI" id="CHEBI:58359"/>
    </ligand>
</feature>
<feature type="binding site" evidence="1">
    <location>
        <begin position="381"/>
        <end position="384"/>
    </location>
    <ligand>
        <name>L-glutamine</name>
        <dbReference type="ChEBI" id="CHEBI:58359"/>
    </ligand>
</feature>
<feature type="binding site" evidence="1">
    <location>
        <position position="404"/>
    </location>
    <ligand>
        <name>L-glutamine</name>
        <dbReference type="ChEBI" id="CHEBI:58359"/>
    </ligand>
</feature>
<feature type="binding site" evidence="1">
    <location>
        <position position="471"/>
    </location>
    <ligand>
        <name>L-glutamine</name>
        <dbReference type="ChEBI" id="CHEBI:58359"/>
    </ligand>
</feature>
<dbReference type="EC" id="6.3.4.2" evidence="1"/>
<dbReference type="EMBL" id="CP001111">
    <property type="protein sequence ID" value="ACF51153.1"/>
    <property type="molecule type" value="Genomic_DNA"/>
</dbReference>
<dbReference type="RefSeq" id="WP_004152841.1">
    <property type="nucleotide sequence ID" value="NC_011071.1"/>
</dbReference>
<dbReference type="SMR" id="B4SR82"/>
<dbReference type="STRING" id="391008.Smal_1448"/>
<dbReference type="MEROPS" id="C26.964"/>
<dbReference type="KEGG" id="smt:Smal_1448"/>
<dbReference type="eggNOG" id="COG0504">
    <property type="taxonomic scope" value="Bacteria"/>
</dbReference>
<dbReference type="HOGENOM" id="CLU_011675_5_0_6"/>
<dbReference type="OrthoDB" id="9801107at2"/>
<dbReference type="UniPathway" id="UPA00159">
    <property type="reaction ID" value="UER00277"/>
</dbReference>
<dbReference type="Proteomes" id="UP000001867">
    <property type="component" value="Chromosome"/>
</dbReference>
<dbReference type="GO" id="GO:0005829">
    <property type="term" value="C:cytosol"/>
    <property type="evidence" value="ECO:0007669"/>
    <property type="project" value="TreeGrafter"/>
</dbReference>
<dbReference type="GO" id="GO:0005524">
    <property type="term" value="F:ATP binding"/>
    <property type="evidence" value="ECO:0007669"/>
    <property type="project" value="UniProtKB-KW"/>
</dbReference>
<dbReference type="GO" id="GO:0003883">
    <property type="term" value="F:CTP synthase activity"/>
    <property type="evidence" value="ECO:0007669"/>
    <property type="project" value="UniProtKB-UniRule"/>
</dbReference>
<dbReference type="GO" id="GO:0004359">
    <property type="term" value="F:glutaminase activity"/>
    <property type="evidence" value="ECO:0007669"/>
    <property type="project" value="RHEA"/>
</dbReference>
<dbReference type="GO" id="GO:0042802">
    <property type="term" value="F:identical protein binding"/>
    <property type="evidence" value="ECO:0007669"/>
    <property type="project" value="TreeGrafter"/>
</dbReference>
<dbReference type="GO" id="GO:0046872">
    <property type="term" value="F:metal ion binding"/>
    <property type="evidence" value="ECO:0007669"/>
    <property type="project" value="UniProtKB-KW"/>
</dbReference>
<dbReference type="GO" id="GO:0044210">
    <property type="term" value="P:'de novo' CTP biosynthetic process"/>
    <property type="evidence" value="ECO:0007669"/>
    <property type="project" value="UniProtKB-UniRule"/>
</dbReference>
<dbReference type="GO" id="GO:0019856">
    <property type="term" value="P:pyrimidine nucleobase biosynthetic process"/>
    <property type="evidence" value="ECO:0007669"/>
    <property type="project" value="TreeGrafter"/>
</dbReference>
<dbReference type="CDD" id="cd03113">
    <property type="entry name" value="CTPS_N"/>
    <property type="match status" value="1"/>
</dbReference>
<dbReference type="CDD" id="cd01746">
    <property type="entry name" value="GATase1_CTP_Synthase"/>
    <property type="match status" value="1"/>
</dbReference>
<dbReference type="FunFam" id="3.40.50.300:FF:000009">
    <property type="entry name" value="CTP synthase"/>
    <property type="match status" value="1"/>
</dbReference>
<dbReference type="FunFam" id="3.40.50.880:FF:000002">
    <property type="entry name" value="CTP synthase"/>
    <property type="match status" value="1"/>
</dbReference>
<dbReference type="Gene3D" id="3.40.50.880">
    <property type="match status" value="1"/>
</dbReference>
<dbReference type="Gene3D" id="3.40.50.300">
    <property type="entry name" value="P-loop containing nucleotide triphosphate hydrolases"/>
    <property type="match status" value="1"/>
</dbReference>
<dbReference type="HAMAP" id="MF_01227">
    <property type="entry name" value="PyrG"/>
    <property type="match status" value="1"/>
</dbReference>
<dbReference type="InterPro" id="IPR029062">
    <property type="entry name" value="Class_I_gatase-like"/>
</dbReference>
<dbReference type="InterPro" id="IPR004468">
    <property type="entry name" value="CTP_synthase"/>
</dbReference>
<dbReference type="InterPro" id="IPR017456">
    <property type="entry name" value="CTP_synthase_N"/>
</dbReference>
<dbReference type="InterPro" id="IPR017926">
    <property type="entry name" value="GATASE"/>
</dbReference>
<dbReference type="InterPro" id="IPR033828">
    <property type="entry name" value="GATase1_CTP_Synthase"/>
</dbReference>
<dbReference type="InterPro" id="IPR027417">
    <property type="entry name" value="P-loop_NTPase"/>
</dbReference>
<dbReference type="NCBIfam" id="NF003792">
    <property type="entry name" value="PRK05380.1"/>
    <property type="match status" value="1"/>
</dbReference>
<dbReference type="NCBIfam" id="TIGR00337">
    <property type="entry name" value="PyrG"/>
    <property type="match status" value="1"/>
</dbReference>
<dbReference type="PANTHER" id="PTHR11550">
    <property type="entry name" value="CTP SYNTHASE"/>
    <property type="match status" value="1"/>
</dbReference>
<dbReference type="PANTHER" id="PTHR11550:SF0">
    <property type="entry name" value="CTP SYNTHASE-RELATED"/>
    <property type="match status" value="1"/>
</dbReference>
<dbReference type="Pfam" id="PF06418">
    <property type="entry name" value="CTP_synth_N"/>
    <property type="match status" value="1"/>
</dbReference>
<dbReference type="Pfam" id="PF00117">
    <property type="entry name" value="GATase"/>
    <property type="match status" value="1"/>
</dbReference>
<dbReference type="SUPFAM" id="SSF52317">
    <property type="entry name" value="Class I glutamine amidotransferase-like"/>
    <property type="match status" value="1"/>
</dbReference>
<dbReference type="SUPFAM" id="SSF52540">
    <property type="entry name" value="P-loop containing nucleoside triphosphate hydrolases"/>
    <property type="match status" value="1"/>
</dbReference>
<dbReference type="PROSITE" id="PS51273">
    <property type="entry name" value="GATASE_TYPE_1"/>
    <property type="match status" value="1"/>
</dbReference>
<sequence length="554" mass="61183">MTPLIFVTGGVVSSLGKGIAAASLAAILEARGLKVTMMKLDPYINVDPGTMSPFQHGEVYVTDDGAETDLDLGHYERFVRTRLSRKNSVTTGRIYENVIRKERRGDYLGATVQVIPHITDEIRRCIDEATEGYDVALVEIGGTVGDIESLPFLEAIRQVRTERGPEKALFMHLTLVPYIGAAGELKTKPTQHSVKELRSIGIQPDVLLCRSEQAVPDSERRKIAQFTNVSERAVISVPDVDVLYRIPSGLHAQGLDEIVVNQLKLADKVGPVDLSMWEDAVDATLHPLDEVTIAVVGKYVDHQDAYKSVGEALKHGGLRQRTKVNLKWLEAQDLEGTDMAALADVDGILVPGGFGDRGFEGKVLTSKFAREQQVPYFGICYGMQAAVVDYARNVVGLEGANSTENDRQSPNPVIGLITEWRTATGDVEKRDDKSDLGGTMRLGLQEQRLKPGTLARELYGKDVVAERHRHRYEFNNRYRTQLEDAGLVIAGKSMDDTLVEVVELPRDAHPWFLACQAHPEFLSTPRDGHPLFIGFIRAARERKAGGKLLQEVRA</sequence>
<evidence type="ECO:0000255" key="1">
    <source>
        <dbReference type="HAMAP-Rule" id="MF_01227"/>
    </source>
</evidence>
<keyword id="KW-0067">ATP-binding</keyword>
<keyword id="KW-0315">Glutamine amidotransferase</keyword>
<keyword id="KW-0436">Ligase</keyword>
<keyword id="KW-0460">Magnesium</keyword>
<keyword id="KW-0479">Metal-binding</keyword>
<keyword id="KW-0547">Nucleotide-binding</keyword>
<keyword id="KW-0665">Pyrimidine biosynthesis</keyword>
<reference key="1">
    <citation type="submission" date="2008-06" db="EMBL/GenBank/DDBJ databases">
        <title>Complete sequence of Stenotrophomonas maltophilia R551-3.</title>
        <authorList>
            <consortium name="US DOE Joint Genome Institute"/>
            <person name="Lucas S."/>
            <person name="Copeland A."/>
            <person name="Lapidus A."/>
            <person name="Glavina del Rio T."/>
            <person name="Dalin E."/>
            <person name="Tice H."/>
            <person name="Pitluck S."/>
            <person name="Chain P."/>
            <person name="Malfatti S."/>
            <person name="Shin M."/>
            <person name="Vergez L."/>
            <person name="Lang D."/>
            <person name="Schmutz J."/>
            <person name="Larimer F."/>
            <person name="Land M."/>
            <person name="Hauser L."/>
            <person name="Kyrpides N."/>
            <person name="Mikhailova N."/>
            <person name="Taghavi S."/>
            <person name="Monchy S."/>
            <person name="Newman L."/>
            <person name="Vangronsveld J."/>
            <person name="van der Lelie D."/>
            <person name="Richardson P."/>
        </authorList>
    </citation>
    <scope>NUCLEOTIDE SEQUENCE [LARGE SCALE GENOMIC DNA]</scope>
    <source>
        <strain>R551-3</strain>
    </source>
</reference>
<proteinExistence type="inferred from homology"/>
<gene>
    <name evidence="1" type="primary">pyrG</name>
    <name type="ordered locus">Smal_1448</name>
</gene>
<protein>
    <recommendedName>
        <fullName evidence="1">CTP synthase</fullName>
        <ecNumber evidence="1">6.3.4.2</ecNumber>
    </recommendedName>
    <alternativeName>
        <fullName evidence="1">Cytidine 5'-triphosphate synthase</fullName>
    </alternativeName>
    <alternativeName>
        <fullName evidence="1">Cytidine triphosphate synthetase</fullName>
        <shortName evidence="1">CTP synthetase</shortName>
        <shortName evidence="1">CTPS</shortName>
    </alternativeName>
    <alternativeName>
        <fullName evidence="1">UTP--ammonia ligase</fullName>
    </alternativeName>
</protein>
<accession>B4SR82</accession>
<comment type="function">
    <text evidence="1">Catalyzes the ATP-dependent amination of UTP to CTP with either L-glutamine or ammonia as the source of nitrogen. Regulates intracellular CTP levels through interactions with the four ribonucleotide triphosphates.</text>
</comment>
<comment type="catalytic activity">
    <reaction evidence="1">
        <text>UTP + L-glutamine + ATP + H2O = CTP + L-glutamate + ADP + phosphate + 2 H(+)</text>
        <dbReference type="Rhea" id="RHEA:26426"/>
        <dbReference type="ChEBI" id="CHEBI:15377"/>
        <dbReference type="ChEBI" id="CHEBI:15378"/>
        <dbReference type="ChEBI" id="CHEBI:29985"/>
        <dbReference type="ChEBI" id="CHEBI:30616"/>
        <dbReference type="ChEBI" id="CHEBI:37563"/>
        <dbReference type="ChEBI" id="CHEBI:43474"/>
        <dbReference type="ChEBI" id="CHEBI:46398"/>
        <dbReference type="ChEBI" id="CHEBI:58359"/>
        <dbReference type="ChEBI" id="CHEBI:456216"/>
        <dbReference type="EC" id="6.3.4.2"/>
    </reaction>
</comment>
<comment type="catalytic activity">
    <reaction evidence="1">
        <text>L-glutamine + H2O = L-glutamate + NH4(+)</text>
        <dbReference type="Rhea" id="RHEA:15889"/>
        <dbReference type="ChEBI" id="CHEBI:15377"/>
        <dbReference type="ChEBI" id="CHEBI:28938"/>
        <dbReference type="ChEBI" id="CHEBI:29985"/>
        <dbReference type="ChEBI" id="CHEBI:58359"/>
    </reaction>
</comment>
<comment type="catalytic activity">
    <reaction evidence="1">
        <text>UTP + NH4(+) + ATP = CTP + ADP + phosphate + 2 H(+)</text>
        <dbReference type="Rhea" id="RHEA:16597"/>
        <dbReference type="ChEBI" id="CHEBI:15378"/>
        <dbReference type="ChEBI" id="CHEBI:28938"/>
        <dbReference type="ChEBI" id="CHEBI:30616"/>
        <dbReference type="ChEBI" id="CHEBI:37563"/>
        <dbReference type="ChEBI" id="CHEBI:43474"/>
        <dbReference type="ChEBI" id="CHEBI:46398"/>
        <dbReference type="ChEBI" id="CHEBI:456216"/>
    </reaction>
</comment>
<comment type="activity regulation">
    <text evidence="1">Allosterically activated by GTP, when glutamine is the substrate; GTP has no effect on the reaction when ammonia is the substrate. The allosteric effector GTP functions by stabilizing the protein conformation that binds the tetrahedral intermediate(s) formed during glutamine hydrolysis. Inhibited by the product CTP, via allosteric rather than competitive inhibition.</text>
</comment>
<comment type="pathway">
    <text evidence="1">Pyrimidine metabolism; CTP biosynthesis via de novo pathway; CTP from UDP: step 2/2.</text>
</comment>
<comment type="subunit">
    <text evidence="1">Homotetramer.</text>
</comment>
<comment type="miscellaneous">
    <text evidence="1">CTPSs have evolved a hybrid strategy for distinguishing between UTP and CTP. The overlapping regions of the product feedback inhibitory and substrate sites recognize a common feature in both compounds, the triphosphate moiety. To differentiate isosteric substrate and product pyrimidine rings, an additional pocket far from the expected kinase/ligase catalytic site, specifically recognizes the cytosine and ribose portions of the product inhibitor.</text>
</comment>
<comment type="similarity">
    <text evidence="1">Belongs to the CTP synthase family.</text>
</comment>
<organism>
    <name type="scientific">Stenotrophomonas maltophilia (strain R551-3)</name>
    <dbReference type="NCBI Taxonomy" id="391008"/>
    <lineage>
        <taxon>Bacteria</taxon>
        <taxon>Pseudomonadati</taxon>
        <taxon>Pseudomonadota</taxon>
        <taxon>Gammaproteobacteria</taxon>
        <taxon>Lysobacterales</taxon>
        <taxon>Lysobacteraceae</taxon>
        <taxon>Stenotrophomonas</taxon>
        <taxon>Stenotrophomonas maltophilia group</taxon>
    </lineage>
</organism>